<organism>
    <name type="scientific">Synechococcus sp. (strain CC9902)</name>
    <dbReference type="NCBI Taxonomy" id="316279"/>
    <lineage>
        <taxon>Bacteria</taxon>
        <taxon>Bacillati</taxon>
        <taxon>Cyanobacteriota</taxon>
        <taxon>Cyanophyceae</taxon>
        <taxon>Synechococcales</taxon>
        <taxon>Synechococcaceae</taxon>
        <taxon>Synechococcus</taxon>
    </lineage>
</organism>
<reference key="1">
    <citation type="submission" date="2005-08" db="EMBL/GenBank/DDBJ databases">
        <title>Complete sequence of Synechococcus sp. CC9902.</title>
        <authorList>
            <person name="Copeland A."/>
            <person name="Lucas S."/>
            <person name="Lapidus A."/>
            <person name="Barry K."/>
            <person name="Detter J.C."/>
            <person name="Glavina T."/>
            <person name="Hammon N."/>
            <person name="Israni S."/>
            <person name="Pitluck S."/>
            <person name="Martinez M."/>
            <person name="Schmutz J."/>
            <person name="Larimer F."/>
            <person name="Land M."/>
            <person name="Kyrpides N."/>
            <person name="Ivanova N."/>
            <person name="Richardson P."/>
        </authorList>
    </citation>
    <scope>NUCLEOTIDE SEQUENCE [LARGE SCALE GENOMIC DNA]</scope>
    <source>
        <strain>CC9902</strain>
    </source>
</reference>
<comment type="function">
    <text evidence="1">Cleaves peptides in various proteins in a process that requires ATP hydrolysis. Has a chymotrypsin-like activity. Plays a major role in the degradation of misfolded proteins.</text>
</comment>
<comment type="catalytic activity">
    <reaction evidence="1">
        <text>Hydrolysis of proteins to small peptides in the presence of ATP and magnesium. alpha-casein is the usual test substrate. In the absence of ATP, only oligopeptides shorter than five residues are hydrolyzed (such as succinyl-Leu-Tyr-|-NHMec, and Leu-Tyr-Leu-|-Tyr-Trp, in which cleavage of the -Tyr-|-Leu- and -Tyr-|-Trp bonds also occurs).</text>
        <dbReference type="EC" id="3.4.21.92"/>
    </reaction>
</comment>
<comment type="subunit">
    <text evidence="1">Fourteen ClpP subunits assemble into 2 heptameric rings which stack back to back to give a disk-like structure with a central cavity, resembling the structure of eukaryotic proteasomes.</text>
</comment>
<comment type="subcellular location">
    <subcellularLocation>
        <location evidence="1">Cytoplasm</location>
    </subcellularLocation>
</comment>
<comment type="similarity">
    <text evidence="1">Belongs to the peptidase S14 family.</text>
</comment>
<feature type="chain" id="PRO_0000236409" description="ATP-dependent Clp protease proteolytic subunit 1">
    <location>
        <begin position="1"/>
        <end position="197"/>
    </location>
</feature>
<feature type="active site" description="Nucleophile" evidence="1">
    <location>
        <position position="96"/>
    </location>
</feature>
<feature type="active site" evidence="1">
    <location>
        <position position="121"/>
    </location>
</feature>
<proteinExistence type="inferred from homology"/>
<sequence length="197" mass="21709">MIPIVIEESGRGERAFDIYSRLLRERIIFLGEAVTSDSANRIVAQMLFLEAEDPEKDIYLYINSPGGSVYDGLGIFDTMQHIKPDVQTVCVGLAASMGAFLLCAGTKGKRSSLQHSRIMIHQPLGGASGQASDIRIQADEILYLKDRLNTELSDRTGQPLDRIQEDTDRDFFMSPGEAVSYGLIDSVIDKRPVQAVA</sequence>
<protein>
    <recommendedName>
        <fullName evidence="1">ATP-dependent Clp protease proteolytic subunit 1</fullName>
        <ecNumber evidence="1">3.4.21.92</ecNumber>
    </recommendedName>
    <alternativeName>
        <fullName evidence="1">Endopeptidase Clp 1</fullName>
    </alternativeName>
</protein>
<gene>
    <name evidence="1" type="primary">clpP1</name>
    <name type="ordered locus">Syncc9902_1059</name>
</gene>
<dbReference type="EC" id="3.4.21.92" evidence="1"/>
<dbReference type="EMBL" id="CP000097">
    <property type="protein sequence ID" value="ABB26023.1"/>
    <property type="molecule type" value="Genomic_DNA"/>
</dbReference>
<dbReference type="SMR" id="Q3AY04"/>
<dbReference type="STRING" id="316279.Syncc9902_1059"/>
<dbReference type="MEROPS" id="S14.001"/>
<dbReference type="KEGG" id="sye:Syncc9902_1059"/>
<dbReference type="eggNOG" id="COG0740">
    <property type="taxonomic scope" value="Bacteria"/>
</dbReference>
<dbReference type="HOGENOM" id="CLU_058707_3_2_3"/>
<dbReference type="OrthoDB" id="571524at2"/>
<dbReference type="Proteomes" id="UP000002712">
    <property type="component" value="Chromosome"/>
</dbReference>
<dbReference type="GO" id="GO:0005737">
    <property type="term" value="C:cytoplasm"/>
    <property type="evidence" value="ECO:0007669"/>
    <property type="project" value="UniProtKB-SubCell"/>
</dbReference>
<dbReference type="GO" id="GO:0009368">
    <property type="term" value="C:endopeptidase Clp complex"/>
    <property type="evidence" value="ECO:0007669"/>
    <property type="project" value="TreeGrafter"/>
</dbReference>
<dbReference type="GO" id="GO:0004176">
    <property type="term" value="F:ATP-dependent peptidase activity"/>
    <property type="evidence" value="ECO:0007669"/>
    <property type="project" value="InterPro"/>
</dbReference>
<dbReference type="GO" id="GO:0051117">
    <property type="term" value="F:ATPase binding"/>
    <property type="evidence" value="ECO:0007669"/>
    <property type="project" value="TreeGrafter"/>
</dbReference>
<dbReference type="GO" id="GO:0004252">
    <property type="term" value="F:serine-type endopeptidase activity"/>
    <property type="evidence" value="ECO:0007669"/>
    <property type="project" value="UniProtKB-UniRule"/>
</dbReference>
<dbReference type="GO" id="GO:0006515">
    <property type="term" value="P:protein quality control for misfolded or incompletely synthesized proteins"/>
    <property type="evidence" value="ECO:0007669"/>
    <property type="project" value="TreeGrafter"/>
</dbReference>
<dbReference type="CDD" id="cd07017">
    <property type="entry name" value="S14_ClpP_2"/>
    <property type="match status" value="1"/>
</dbReference>
<dbReference type="FunFam" id="3.90.226.10:FF:000001">
    <property type="entry name" value="ATP-dependent Clp protease proteolytic subunit"/>
    <property type="match status" value="1"/>
</dbReference>
<dbReference type="Gene3D" id="3.90.226.10">
    <property type="entry name" value="2-enoyl-CoA Hydratase, Chain A, domain 1"/>
    <property type="match status" value="1"/>
</dbReference>
<dbReference type="HAMAP" id="MF_00444">
    <property type="entry name" value="ClpP"/>
    <property type="match status" value="1"/>
</dbReference>
<dbReference type="InterPro" id="IPR001907">
    <property type="entry name" value="ClpP"/>
</dbReference>
<dbReference type="InterPro" id="IPR029045">
    <property type="entry name" value="ClpP/crotonase-like_dom_sf"/>
</dbReference>
<dbReference type="InterPro" id="IPR023562">
    <property type="entry name" value="ClpP/TepA"/>
</dbReference>
<dbReference type="InterPro" id="IPR018215">
    <property type="entry name" value="ClpP_Ser_AS"/>
</dbReference>
<dbReference type="NCBIfam" id="TIGR00493">
    <property type="entry name" value="clpP"/>
    <property type="match status" value="1"/>
</dbReference>
<dbReference type="NCBIfam" id="NF001368">
    <property type="entry name" value="PRK00277.1"/>
    <property type="match status" value="1"/>
</dbReference>
<dbReference type="NCBIfam" id="NF009203">
    <property type="entry name" value="PRK12551.1"/>
    <property type="match status" value="1"/>
</dbReference>
<dbReference type="NCBIfam" id="NF009205">
    <property type="entry name" value="PRK12553.1"/>
    <property type="match status" value="1"/>
</dbReference>
<dbReference type="PANTHER" id="PTHR10381">
    <property type="entry name" value="ATP-DEPENDENT CLP PROTEASE PROTEOLYTIC SUBUNIT"/>
    <property type="match status" value="1"/>
</dbReference>
<dbReference type="PANTHER" id="PTHR10381:SF70">
    <property type="entry name" value="ATP-DEPENDENT CLP PROTEASE PROTEOLYTIC SUBUNIT"/>
    <property type="match status" value="1"/>
</dbReference>
<dbReference type="Pfam" id="PF00574">
    <property type="entry name" value="CLP_protease"/>
    <property type="match status" value="1"/>
</dbReference>
<dbReference type="PRINTS" id="PR00127">
    <property type="entry name" value="CLPPROTEASEP"/>
</dbReference>
<dbReference type="SUPFAM" id="SSF52096">
    <property type="entry name" value="ClpP/crotonase"/>
    <property type="match status" value="1"/>
</dbReference>
<dbReference type="PROSITE" id="PS00381">
    <property type="entry name" value="CLP_PROTEASE_SER"/>
    <property type="match status" value="1"/>
</dbReference>
<accession>Q3AY04</accession>
<name>CLPP1_SYNS9</name>
<keyword id="KW-0963">Cytoplasm</keyword>
<keyword id="KW-0378">Hydrolase</keyword>
<keyword id="KW-0645">Protease</keyword>
<keyword id="KW-1185">Reference proteome</keyword>
<keyword id="KW-0720">Serine protease</keyword>
<evidence type="ECO:0000255" key="1">
    <source>
        <dbReference type="HAMAP-Rule" id="MF_00444"/>
    </source>
</evidence>